<sequence>MTQETYPSCSFPAHPRSWVEIDGRALRFNIRVARERIPKKTKIIAVVKSEAYGHGLIPIAKELVHSGVEVLGINNIDEAIELRQAGIRSALLILCPILPSEASIIVSYNVGVVISSYNEAKWLSQAAERQGKKAIVHIKIDTGMGRLGFIPSQFIQEMEKIKRLSSLSIAAICTHFSQAETDIEATEKQWLELLKFRHYFKGLPIHVANSAALWRKSVYACDYVRIGLALYGIAPMPFLRRFLKPILTWKCKIVLIKELPRGHPISYGATYKLKKPSRIAVLSVGYGDGYCRSLSNKASVLIKGKRCPVRGAITMNLLMVDITDLPSCKVGDEAVLLGTQGKESITADELAKLSQTISYEIITNIHSHIRRNYRHFLSHSNELSLYE</sequence>
<reference key="1">
    <citation type="journal article" date="2008" name="Biol. Direct">
        <title>Complete genome sequence of the extremely acidophilic methanotroph isolate V4, Methylacidiphilum infernorum, a representative of the bacterial phylum Verrucomicrobia.</title>
        <authorList>
            <person name="Hou S."/>
            <person name="Makarova K.S."/>
            <person name="Saw J.H."/>
            <person name="Senin P."/>
            <person name="Ly B.V."/>
            <person name="Zhou Z."/>
            <person name="Ren Y."/>
            <person name="Wang J."/>
            <person name="Galperin M.Y."/>
            <person name="Omelchenko M.V."/>
            <person name="Wolf Y.I."/>
            <person name="Yutin N."/>
            <person name="Koonin E.V."/>
            <person name="Stott M.B."/>
            <person name="Mountain B.W."/>
            <person name="Crowe M.A."/>
            <person name="Smirnova A.V."/>
            <person name="Dunfield P.F."/>
            <person name="Feng L."/>
            <person name="Wang L."/>
            <person name="Alam M."/>
        </authorList>
    </citation>
    <scope>NUCLEOTIDE SEQUENCE [LARGE SCALE GENOMIC DNA]</scope>
    <source>
        <strain>Isolate V4</strain>
    </source>
</reference>
<accession>B3DWZ0</accession>
<proteinExistence type="inferred from homology"/>
<organism>
    <name type="scientific">Methylacidiphilum infernorum (isolate V4)</name>
    <name type="common">Methylokorus infernorum (strain V4)</name>
    <dbReference type="NCBI Taxonomy" id="481448"/>
    <lineage>
        <taxon>Bacteria</taxon>
        <taxon>Pseudomonadati</taxon>
        <taxon>Verrucomicrobiota</taxon>
        <taxon>Methylacidiphilae</taxon>
        <taxon>Methylacidiphilales</taxon>
        <taxon>Methylacidiphilaceae</taxon>
        <taxon>Methylacidiphilum (ex Ratnadevi et al. 2023)</taxon>
    </lineage>
</organism>
<feature type="chain" id="PRO_1000213837" description="Alanine racemase">
    <location>
        <begin position="1"/>
        <end position="387"/>
    </location>
</feature>
<feature type="active site" description="Proton acceptor; specific for D-alanine" evidence="1">
    <location>
        <position position="48"/>
    </location>
</feature>
<feature type="active site" description="Proton acceptor; specific for L-alanine" evidence="1">
    <location>
        <position position="267"/>
    </location>
</feature>
<feature type="binding site" evidence="1">
    <location>
        <position position="146"/>
    </location>
    <ligand>
        <name>substrate</name>
    </ligand>
</feature>
<feature type="binding site" evidence="1">
    <location>
        <position position="315"/>
    </location>
    <ligand>
        <name>substrate</name>
    </ligand>
</feature>
<feature type="modified residue" description="N6-(pyridoxal phosphate)lysine" evidence="1">
    <location>
        <position position="48"/>
    </location>
</feature>
<name>ALR_METI4</name>
<comment type="function">
    <text evidence="1">Catalyzes the interconversion of L-alanine and D-alanine. May also act on other amino acids.</text>
</comment>
<comment type="catalytic activity">
    <reaction evidence="1">
        <text>L-alanine = D-alanine</text>
        <dbReference type="Rhea" id="RHEA:20249"/>
        <dbReference type="ChEBI" id="CHEBI:57416"/>
        <dbReference type="ChEBI" id="CHEBI:57972"/>
        <dbReference type="EC" id="5.1.1.1"/>
    </reaction>
</comment>
<comment type="cofactor">
    <cofactor evidence="1">
        <name>pyridoxal 5'-phosphate</name>
        <dbReference type="ChEBI" id="CHEBI:597326"/>
    </cofactor>
</comment>
<comment type="pathway">
    <text evidence="1">Amino-acid biosynthesis; D-alanine biosynthesis; D-alanine from L-alanine: step 1/1.</text>
</comment>
<comment type="similarity">
    <text evidence="1">Belongs to the alanine racemase family.</text>
</comment>
<gene>
    <name type="primary">alr</name>
    <name type="ordered locus">Minf_0070</name>
</gene>
<dbReference type="EC" id="5.1.1.1" evidence="1"/>
<dbReference type="EMBL" id="CP000975">
    <property type="protein sequence ID" value="ACD82130.1"/>
    <property type="molecule type" value="Genomic_DNA"/>
</dbReference>
<dbReference type="RefSeq" id="WP_012462412.1">
    <property type="nucleotide sequence ID" value="NC_010794.1"/>
</dbReference>
<dbReference type="SMR" id="B3DWZ0"/>
<dbReference type="STRING" id="481448.Minf_0070"/>
<dbReference type="KEGG" id="min:Minf_0070"/>
<dbReference type="eggNOG" id="COG0787">
    <property type="taxonomic scope" value="Bacteria"/>
</dbReference>
<dbReference type="HOGENOM" id="CLU_028393_2_2_0"/>
<dbReference type="OrthoDB" id="9813814at2"/>
<dbReference type="UniPathway" id="UPA00042">
    <property type="reaction ID" value="UER00497"/>
</dbReference>
<dbReference type="Proteomes" id="UP000009149">
    <property type="component" value="Chromosome"/>
</dbReference>
<dbReference type="GO" id="GO:0005829">
    <property type="term" value="C:cytosol"/>
    <property type="evidence" value="ECO:0007669"/>
    <property type="project" value="TreeGrafter"/>
</dbReference>
<dbReference type="GO" id="GO:0008784">
    <property type="term" value="F:alanine racemase activity"/>
    <property type="evidence" value="ECO:0007669"/>
    <property type="project" value="UniProtKB-UniRule"/>
</dbReference>
<dbReference type="GO" id="GO:0030170">
    <property type="term" value="F:pyridoxal phosphate binding"/>
    <property type="evidence" value="ECO:0007669"/>
    <property type="project" value="UniProtKB-UniRule"/>
</dbReference>
<dbReference type="GO" id="GO:0030632">
    <property type="term" value="P:D-alanine biosynthetic process"/>
    <property type="evidence" value="ECO:0007669"/>
    <property type="project" value="UniProtKB-UniRule"/>
</dbReference>
<dbReference type="CDD" id="cd00430">
    <property type="entry name" value="PLPDE_III_AR"/>
    <property type="match status" value="1"/>
</dbReference>
<dbReference type="FunFam" id="3.20.20.10:FF:000002">
    <property type="entry name" value="Alanine racemase"/>
    <property type="match status" value="1"/>
</dbReference>
<dbReference type="Gene3D" id="3.20.20.10">
    <property type="entry name" value="Alanine racemase"/>
    <property type="match status" value="1"/>
</dbReference>
<dbReference type="Gene3D" id="2.40.37.10">
    <property type="entry name" value="Lyase, Ornithine Decarboxylase, Chain A, domain 1"/>
    <property type="match status" value="1"/>
</dbReference>
<dbReference type="HAMAP" id="MF_01201">
    <property type="entry name" value="Ala_racemase"/>
    <property type="match status" value="1"/>
</dbReference>
<dbReference type="InterPro" id="IPR000821">
    <property type="entry name" value="Ala_racemase"/>
</dbReference>
<dbReference type="InterPro" id="IPR009006">
    <property type="entry name" value="Ala_racemase/Decarboxylase_C"/>
</dbReference>
<dbReference type="InterPro" id="IPR011079">
    <property type="entry name" value="Ala_racemase_C"/>
</dbReference>
<dbReference type="InterPro" id="IPR001608">
    <property type="entry name" value="Ala_racemase_N"/>
</dbReference>
<dbReference type="InterPro" id="IPR020622">
    <property type="entry name" value="Ala_racemase_pyridoxalP-BS"/>
</dbReference>
<dbReference type="InterPro" id="IPR029066">
    <property type="entry name" value="PLP-binding_barrel"/>
</dbReference>
<dbReference type="NCBIfam" id="TIGR00492">
    <property type="entry name" value="alr"/>
    <property type="match status" value="1"/>
</dbReference>
<dbReference type="PANTHER" id="PTHR30511">
    <property type="entry name" value="ALANINE RACEMASE"/>
    <property type="match status" value="1"/>
</dbReference>
<dbReference type="PANTHER" id="PTHR30511:SF0">
    <property type="entry name" value="ALANINE RACEMASE, CATABOLIC-RELATED"/>
    <property type="match status" value="1"/>
</dbReference>
<dbReference type="Pfam" id="PF00842">
    <property type="entry name" value="Ala_racemase_C"/>
    <property type="match status" value="1"/>
</dbReference>
<dbReference type="Pfam" id="PF01168">
    <property type="entry name" value="Ala_racemase_N"/>
    <property type="match status" value="1"/>
</dbReference>
<dbReference type="PRINTS" id="PR00992">
    <property type="entry name" value="ALARACEMASE"/>
</dbReference>
<dbReference type="SMART" id="SM01005">
    <property type="entry name" value="Ala_racemase_C"/>
    <property type="match status" value="1"/>
</dbReference>
<dbReference type="SUPFAM" id="SSF50621">
    <property type="entry name" value="Alanine racemase C-terminal domain-like"/>
    <property type="match status" value="1"/>
</dbReference>
<dbReference type="SUPFAM" id="SSF51419">
    <property type="entry name" value="PLP-binding barrel"/>
    <property type="match status" value="1"/>
</dbReference>
<dbReference type="PROSITE" id="PS00395">
    <property type="entry name" value="ALANINE_RACEMASE"/>
    <property type="match status" value="1"/>
</dbReference>
<keyword id="KW-0413">Isomerase</keyword>
<keyword id="KW-0663">Pyridoxal phosphate</keyword>
<evidence type="ECO:0000255" key="1">
    <source>
        <dbReference type="HAMAP-Rule" id="MF_01201"/>
    </source>
</evidence>
<protein>
    <recommendedName>
        <fullName evidence="1">Alanine racemase</fullName>
        <ecNumber evidence="1">5.1.1.1</ecNumber>
    </recommendedName>
</protein>